<protein>
    <recommendedName>
        <fullName evidence="1">Maltoporin</fullName>
    </recommendedName>
    <alternativeName>
        <fullName evidence="1">Maltose-inducible porin</fullName>
    </alternativeName>
</protein>
<keyword id="KW-0998">Cell outer membrane</keyword>
<keyword id="KW-0406">Ion transport</keyword>
<keyword id="KW-0472">Membrane</keyword>
<keyword id="KW-0626">Porin</keyword>
<keyword id="KW-0732">Signal</keyword>
<keyword id="KW-0762">Sugar transport</keyword>
<keyword id="KW-0812">Transmembrane</keyword>
<keyword id="KW-1134">Transmembrane beta strand</keyword>
<keyword id="KW-0813">Transport</keyword>
<proteinExistence type="inferred from homology"/>
<comment type="function">
    <text evidence="1">Involved in the transport of maltose and maltodextrins.</text>
</comment>
<comment type="catalytic activity">
    <reaction evidence="1">
        <text>beta-maltose(in) = beta-maltose(out)</text>
        <dbReference type="Rhea" id="RHEA:29731"/>
        <dbReference type="ChEBI" id="CHEBI:18147"/>
    </reaction>
</comment>
<comment type="subunit">
    <text evidence="1">Homotrimer formed of three 18-stranded antiparallel beta-barrels, containing three independent channels.</text>
</comment>
<comment type="subcellular location">
    <subcellularLocation>
        <location evidence="1">Cell outer membrane</location>
        <topology evidence="1">Multi-pass membrane protein</topology>
    </subcellularLocation>
</comment>
<comment type="induction">
    <text evidence="1">By maltose.</text>
</comment>
<comment type="similarity">
    <text evidence="1">Belongs to the porin LamB (TC 1.B.3) family.</text>
</comment>
<evidence type="ECO:0000255" key="1">
    <source>
        <dbReference type="HAMAP-Rule" id="MF_01301"/>
    </source>
</evidence>
<sequence>MMITLRKLPLAVAVAAGVMSAQAMAVDFHGYARSGIGWTGSGGEQQCFQATGAQSKYRLGNECETYAELKLGQEVWKEGDKSFYFDTNVAYSVNQQNDWESTDPAFREANVQGKNLIEWLPGSTIWAGKRFYQRHDVHMIDFYYWDISGPGAGIENIDLGFGKLSLAATRSTEAGGSYTFSSQNIYDEVKDTANDVFDVRLAGLQTNPDGVLELGVDYGRANTTDGYKLADGASKDGWMFTAEHTQSMLKGYNKFVVQYATDAMTTQGKGQARGSDGSSSFTEELPDGTKINYANKVINNNGNMWRILDHGAISLGDKWDLMYVGMYQNIDWDNNLGTEWWTVGVRPMYKWTPIMSTLLEVGYDNVKSQQTGDRNNQYKITLAQQWQAGDSIWSRPAIRIFATYAKWDEKWGYIKDGDNISRYAAATNSGISTNSRGDSDEWTFGAQMEIWW</sequence>
<feature type="signal peptide" evidence="1">
    <location>
        <begin position="1"/>
        <end position="25"/>
    </location>
</feature>
<feature type="chain" id="PRO_1000140489" description="Maltoporin">
    <location>
        <begin position="26"/>
        <end position="452"/>
    </location>
</feature>
<feature type="site" description="Greasy slide, important in sugar transport" evidence="1">
    <location>
        <position position="31"/>
    </location>
</feature>
<feature type="site" description="Greasy slide, important in sugar transport" evidence="1">
    <location>
        <position position="66"/>
    </location>
</feature>
<feature type="site" description="Greasy slide, important in sugar transport" evidence="1">
    <location>
        <position position="99"/>
    </location>
</feature>
<feature type="site" description="Important in sugar transport" evidence="1">
    <location>
        <position position="143"/>
    </location>
</feature>
<feature type="site" description="Greasy slide, important in sugar transport" evidence="1">
    <location>
        <position position="252"/>
    </location>
</feature>
<feature type="site" description="Greasy slide, important in sugar transport" evidence="1">
    <location>
        <position position="393"/>
    </location>
</feature>
<feature type="site" description="Greasy slide, important in sugar transport" evidence="1">
    <location>
        <position position="451"/>
    </location>
</feature>
<name>LAMB_SALA4</name>
<dbReference type="EMBL" id="CP001138">
    <property type="protein sequence ID" value="ACH51274.1"/>
    <property type="molecule type" value="Genomic_DNA"/>
</dbReference>
<dbReference type="RefSeq" id="WP_000973644.1">
    <property type="nucleotide sequence ID" value="NC_011149.1"/>
</dbReference>
<dbReference type="SMR" id="B5F1Q0"/>
<dbReference type="KEGG" id="sea:SeAg_B4488"/>
<dbReference type="HOGENOM" id="CLU_032473_4_1_6"/>
<dbReference type="Proteomes" id="UP000008819">
    <property type="component" value="Chromosome"/>
</dbReference>
<dbReference type="GO" id="GO:0009279">
    <property type="term" value="C:cell outer membrane"/>
    <property type="evidence" value="ECO:0007669"/>
    <property type="project" value="UniProtKB-SubCell"/>
</dbReference>
<dbReference type="GO" id="GO:0046930">
    <property type="term" value="C:pore complex"/>
    <property type="evidence" value="ECO:0007669"/>
    <property type="project" value="UniProtKB-KW"/>
</dbReference>
<dbReference type="GO" id="GO:0042958">
    <property type="term" value="F:maltodextrin transmembrane transporter activity"/>
    <property type="evidence" value="ECO:0007669"/>
    <property type="project" value="InterPro"/>
</dbReference>
<dbReference type="GO" id="GO:0015481">
    <property type="term" value="F:maltose transporting porin activity"/>
    <property type="evidence" value="ECO:0007669"/>
    <property type="project" value="InterPro"/>
</dbReference>
<dbReference type="GO" id="GO:0006811">
    <property type="term" value="P:monoatomic ion transport"/>
    <property type="evidence" value="ECO:0007669"/>
    <property type="project" value="UniProtKB-KW"/>
</dbReference>
<dbReference type="CDD" id="cd01346">
    <property type="entry name" value="Maltoporin-like"/>
    <property type="match status" value="1"/>
</dbReference>
<dbReference type="FunFam" id="2.40.170.10:FF:000001">
    <property type="entry name" value="Maltoporin"/>
    <property type="match status" value="1"/>
</dbReference>
<dbReference type="Gene3D" id="2.40.170.10">
    <property type="entry name" value="Porin, LamB type"/>
    <property type="match status" value="1"/>
</dbReference>
<dbReference type="HAMAP" id="MF_01301">
    <property type="entry name" value="LamB"/>
    <property type="match status" value="1"/>
</dbReference>
<dbReference type="InterPro" id="IPR050286">
    <property type="entry name" value="G_neg_Bact_CarbUptk_Porin"/>
</dbReference>
<dbReference type="InterPro" id="IPR023738">
    <property type="entry name" value="Maltoporin"/>
</dbReference>
<dbReference type="InterPro" id="IPR003192">
    <property type="entry name" value="Porin_LamB"/>
</dbReference>
<dbReference type="InterPro" id="IPR036998">
    <property type="entry name" value="Porin_LamB_sf"/>
</dbReference>
<dbReference type="NCBIfam" id="NF006860">
    <property type="entry name" value="PRK09360.1"/>
    <property type="match status" value="1"/>
</dbReference>
<dbReference type="PANTHER" id="PTHR38762">
    <property type="entry name" value="CRYPTIC OUTER MEMBRANE PORIN BGLH-RELATED"/>
    <property type="match status" value="1"/>
</dbReference>
<dbReference type="PANTHER" id="PTHR38762:SF1">
    <property type="entry name" value="CRYPTIC OUTER MEMBRANE PORIN BGLH-RELATED"/>
    <property type="match status" value="1"/>
</dbReference>
<dbReference type="Pfam" id="PF02264">
    <property type="entry name" value="LamB"/>
    <property type="match status" value="1"/>
</dbReference>
<dbReference type="SUPFAM" id="SSF56935">
    <property type="entry name" value="Porins"/>
    <property type="match status" value="1"/>
</dbReference>
<accession>B5F1Q0</accession>
<organism>
    <name type="scientific">Salmonella agona (strain SL483)</name>
    <dbReference type="NCBI Taxonomy" id="454166"/>
    <lineage>
        <taxon>Bacteria</taxon>
        <taxon>Pseudomonadati</taxon>
        <taxon>Pseudomonadota</taxon>
        <taxon>Gammaproteobacteria</taxon>
        <taxon>Enterobacterales</taxon>
        <taxon>Enterobacteriaceae</taxon>
        <taxon>Salmonella</taxon>
    </lineage>
</organism>
<reference key="1">
    <citation type="journal article" date="2011" name="J. Bacteriol.">
        <title>Comparative genomics of 28 Salmonella enterica isolates: evidence for CRISPR-mediated adaptive sublineage evolution.</title>
        <authorList>
            <person name="Fricke W.F."/>
            <person name="Mammel M.K."/>
            <person name="McDermott P.F."/>
            <person name="Tartera C."/>
            <person name="White D.G."/>
            <person name="Leclerc J.E."/>
            <person name="Ravel J."/>
            <person name="Cebula T.A."/>
        </authorList>
    </citation>
    <scope>NUCLEOTIDE SEQUENCE [LARGE SCALE GENOMIC DNA]</scope>
    <source>
        <strain>SL483</strain>
    </source>
</reference>
<gene>
    <name evidence="1" type="primary">lamB</name>
    <name type="ordered locus">SeAg_B4488</name>
</gene>